<accession>B0D5R2</accession>
<gene>
    <name evidence="1" type="primary">COQ4</name>
    <name type="ORF">LACBIDRAFT_184142</name>
</gene>
<organism>
    <name type="scientific">Laccaria bicolor (strain S238N-H82 / ATCC MYA-4686)</name>
    <name type="common">Bicoloured deceiver</name>
    <name type="synonym">Laccaria laccata var. bicolor</name>
    <dbReference type="NCBI Taxonomy" id="486041"/>
    <lineage>
        <taxon>Eukaryota</taxon>
        <taxon>Fungi</taxon>
        <taxon>Dikarya</taxon>
        <taxon>Basidiomycota</taxon>
        <taxon>Agaricomycotina</taxon>
        <taxon>Agaricomycetes</taxon>
        <taxon>Agaricomycetidae</taxon>
        <taxon>Agaricales</taxon>
        <taxon>Agaricineae</taxon>
        <taxon>Hydnangiaceae</taxon>
        <taxon>Laccaria</taxon>
    </lineage>
</organism>
<protein>
    <recommendedName>
        <fullName evidence="1">Ubiquinone biosynthesis protein COQ4, mitochondrial</fullName>
    </recommendedName>
    <alternativeName>
        <fullName>4-hydroxy-3-methoxy-5-polyprenylbenzoate decarboxylase</fullName>
        <ecNumber evidence="1">4.1.1.130</ecNumber>
    </alternativeName>
    <alternativeName>
        <fullName evidence="1">Coenzyme Q biosynthesis protein 4</fullName>
    </alternativeName>
</protein>
<dbReference type="EC" id="4.1.1.130" evidence="1"/>
<dbReference type="EMBL" id="DS547098">
    <property type="protein sequence ID" value="EDR09817.1"/>
    <property type="molecule type" value="Genomic_DNA"/>
</dbReference>
<dbReference type="RefSeq" id="XP_001879202.1">
    <property type="nucleotide sequence ID" value="XM_001879167.1"/>
</dbReference>
<dbReference type="SMR" id="B0D5R2"/>
<dbReference type="FunCoup" id="B0D5R2">
    <property type="interactions" value="311"/>
</dbReference>
<dbReference type="STRING" id="486041.B0D5R2"/>
<dbReference type="GeneID" id="6074935"/>
<dbReference type="KEGG" id="lbc:LACBIDRAFT_184142"/>
<dbReference type="HOGENOM" id="CLU_061241_0_1_1"/>
<dbReference type="InParanoid" id="B0D5R2"/>
<dbReference type="OrthoDB" id="4249at2759"/>
<dbReference type="UniPathway" id="UPA00232"/>
<dbReference type="Proteomes" id="UP000001194">
    <property type="component" value="Unassembled WGS sequence"/>
</dbReference>
<dbReference type="GO" id="GO:0031314">
    <property type="term" value="C:extrinsic component of mitochondrial inner membrane"/>
    <property type="evidence" value="ECO:0007669"/>
    <property type="project" value="UniProtKB-UniRule"/>
</dbReference>
<dbReference type="GO" id="GO:0006744">
    <property type="term" value="P:ubiquinone biosynthetic process"/>
    <property type="evidence" value="ECO:0007669"/>
    <property type="project" value="UniProtKB-UniRule"/>
</dbReference>
<dbReference type="HAMAP" id="MF_03111">
    <property type="entry name" value="Coq4"/>
    <property type="match status" value="1"/>
</dbReference>
<dbReference type="InterPro" id="IPR007715">
    <property type="entry name" value="Coq4"/>
</dbReference>
<dbReference type="InterPro" id="IPR027540">
    <property type="entry name" value="Coq4_euk"/>
</dbReference>
<dbReference type="PANTHER" id="PTHR12922">
    <property type="entry name" value="UBIQUINONE BIOSYNTHESIS PROTEIN"/>
    <property type="match status" value="1"/>
</dbReference>
<dbReference type="PANTHER" id="PTHR12922:SF7">
    <property type="entry name" value="UBIQUINONE BIOSYNTHESIS PROTEIN COQ4 HOMOLOG, MITOCHONDRIAL"/>
    <property type="match status" value="1"/>
</dbReference>
<dbReference type="Pfam" id="PF05019">
    <property type="entry name" value="Coq4"/>
    <property type="match status" value="1"/>
</dbReference>
<reference key="1">
    <citation type="journal article" date="2008" name="Nature">
        <title>The genome of Laccaria bicolor provides insights into mycorrhizal symbiosis.</title>
        <authorList>
            <person name="Martin F."/>
            <person name="Aerts A."/>
            <person name="Ahren D."/>
            <person name="Brun A."/>
            <person name="Danchin E.G.J."/>
            <person name="Duchaussoy F."/>
            <person name="Gibon J."/>
            <person name="Kohler A."/>
            <person name="Lindquist E."/>
            <person name="Pereda V."/>
            <person name="Salamov A."/>
            <person name="Shapiro H.J."/>
            <person name="Wuyts J."/>
            <person name="Blaudez D."/>
            <person name="Buee M."/>
            <person name="Brokstein P."/>
            <person name="Canbaeck B."/>
            <person name="Cohen D."/>
            <person name="Courty P.E."/>
            <person name="Coutinho P.M."/>
            <person name="Delaruelle C."/>
            <person name="Detter J.C."/>
            <person name="Deveau A."/>
            <person name="DiFazio S."/>
            <person name="Duplessis S."/>
            <person name="Fraissinet-Tachet L."/>
            <person name="Lucic E."/>
            <person name="Frey-Klett P."/>
            <person name="Fourrey C."/>
            <person name="Feussner I."/>
            <person name="Gay G."/>
            <person name="Grimwood J."/>
            <person name="Hoegger P.J."/>
            <person name="Jain P."/>
            <person name="Kilaru S."/>
            <person name="Labbe J."/>
            <person name="Lin Y.C."/>
            <person name="Legue V."/>
            <person name="Le Tacon F."/>
            <person name="Marmeisse R."/>
            <person name="Melayah D."/>
            <person name="Montanini B."/>
            <person name="Muratet M."/>
            <person name="Nehls U."/>
            <person name="Niculita-Hirzel H."/>
            <person name="Oudot-Le Secq M.P."/>
            <person name="Peter M."/>
            <person name="Quesneville H."/>
            <person name="Rajashekar B."/>
            <person name="Reich M."/>
            <person name="Rouhier N."/>
            <person name="Schmutz J."/>
            <person name="Yin T."/>
            <person name="Chalot M."/>
            <person name="Henrissat B."/>
            <person name="Kuees U."/>
            <person name="Lucas S."/>
            <person name="Van de Peer Y."/>
            <person name="Podila G.K."/>
            <person name="Polle A."/>
            <person name="Pukkila P.J."/>
            <person name="Richardson P.M."/>
            <person name="Rouze P."/>
            <person name="Sanders I.R."/>
            <person name="Stajich J.E."/>
            <person name="Tunlid A."/>
            <person name="Tuskan G."/>
            <person name="Grigoriev I.V."/>
        </authorList>
    </citation>
    <scope>NUCLEOTIDE SEQUENCE [LARGE SCALE GENOMIC DNA]</scope>
    <source>
        <strain>S238N-H82 / ATCC MYA-4686</strain>
    </source>
</reference>
<sequence length="297" mass="33835">MLSSARARLPISLCSFSLPFARLPNTLSRYQETWQRLPGRTHPTRSIRTTPAYEGHIPLNWFENAVLAVGSAFMSLADPRRGDMVAALGETTAGPTLPSLRDRMLDSIEGRRVLMQRPRVNSSTIDLNKLAHYPEGTFGRAYVTWLERCGVTPDTREPVHYIDDPELAYVMQRYRECHDFYHCICNLPVNVESELALKYFEFANLGLPMTLLSALVGPVRLTPQKRQRLFAEFVPWALKCGGSSRSLITVYWEERWGQNVADMKTEFGIWDPPEARWSKPLSEAKAAAERHRTAQTH</sequence>
<name>COQ4_LACBS</name>
<feature type="transit peptide" description="Mitochondrion" evidence="1">
    <location>
        <begin position="1"/>
        <end position="54"/>
    </location>
</feature>
<feature type="chain" id="PRO_0000388116" description="Ubiquinone biosynthesis protein COQ4, mitochondrial">
    <location>
        <begin position="55"/>
        <end position="297"/>
    </location>
</feature>
<feature type="binding site" evidence="1">
    <location>
        <position position="178"/>
    </location>
    <ligand>
        <name>Zn(2+)</name>
        <dbReference type="ChEBI" id="CHEBI:29105"/>
    </ligand>
</feature>
<feature type="binding site" evidence="1">
    <location>
        <position position="179"/>
    </location>
    <ligand>
        <name>Zn(2+)</name>
        <dbReference type="ChEBI" id="CHEBI:29105"/>
    </ligand>
</feature>
<feature type="binding site" evidence="1">
    <location>
        <position position="182"/>
    </location>
    <ligand>
        <name>Zn(2+)</name>
        <dbReference type="ChEBI" id="CHEBI:29105"/>
    </ligand>
</feature>
<feature type="binding site" evidence="1">
    <location>
        <position position="194"/>
    </location>
    <ligand>
        <name>Zn(2+)</name>
        <dbReference type="ChEBI" id="CHEBI:29105"/>
    </ligand>
</feature>
<keyword id="KW-0456">Lyase</keyword>
<keyword id="KW-0472">Membrane</keyword>
<keyword id="KW-0479">Metal-binding</keyword>
<keyword id="KW-0496">Mitochondrion</keyword>
<keyword id="KW-0999">Mitochondrion inner membrane</keyword>
<keyword id="KW-1185">Reference proteome</keyword>
<keyword id="KW-0809">Transit peptide</keyword>
<keyword id="KW-0831">Ubiquinone biosynthesis</keyword>
<keyword id="KW-0862">Zinc</keyword>
<comment type="function">
    <text evidence="1">Lyase that catalyzes the C1-decarboxylation of 4-hydroxy-3-methoxy-5-(all-trans-polyprenyl)benzoic acid into 2-methoxy-6-(all-trans-polyprenyl)phenol during ubiquinone biosynthesis.</text>
</comment>
<comment type="catalytic activity">
    <reaction evidence="1">
        <text>a 4-hydroxy-3-methoxy-5-(all-trans-polyprenyl)benzoate + H(+) = a 2-methoxy-6-(all-trans-polyprenyl)phenol + CO2</text>
        <dbReference type="Rhea" id="RHEA:81179"/>
        <dbReference type="Rhea" id="RHEA-COMP:9551"/>
        <dbReference type="Rhea" id="RHEA-COMP:10931"/>
        <dbReference type="ChEBI" id="CHEBI:15378"/>
        <dbReference type="ChEBI" id="CHEBI:16526"/>
        <dbReference type="ChEBI" id="CHEBI:62731"/>
        <dbReference type="ChEBI" id="CHEBI:84443"/>
        <dbReference type="EC" id="4.1.1.130"/>
    </reaction>
</comment>
<comment type="cofactor">
    <cofactor evidence="1">
        <name>Zn(2+)</name>
        <dbReference type="ChEBI" id="CHEBI:29105"/>
    </cofactor>
</comment>
<comment type="pathway">
    <text evidence="1">Cofactor biosynthesis; ubiquinone biosynthesis.</text>
</comment>
<comment type="subunit">
    <text evidence="1">Component of a multi-subunit COQ enzyme complex, composed of at least COQ3, COQ4, COQ5, COQ6, COQ7 and COQ9.</text>
</comment>
<comment type="subcellular location">
    <subcellularLocation>
        <location evidence="1">Mitochondrion inner membrane</location>
        <topology evidence="1">Peripheral membrane protein</topology>
        <orientation evidence="1">Matrix side</orientation>
    </subcellularLocation>
</comment>
<comment type="similarity">
    <text evidence="1">Belongs to the COQ4 family.</text>
</comment>
<proteinExistence type="inferred from homology"/>
<evidence type="ECO:0000255" key="1">
    <source>
        <dbReference type="HAMAP-Rule" id="MF_03111"/>
    </source>
</evidence>